<feature type="chain" id="PRO_0000334168" description="Short coiled-coil protein B">
    <location>
        <begin position="1"/>
        <end position="76"/>
    </location>
</feature>
<feature type="coiled-coil region" evidence="2">
    <location>
        <begin position="6"/>
        <end position="52"/>
    </location>
</feature>
<comment type="function">
    <text evidence="1">Positive regulator of amino acid starvation-induced autophagy.</text>
</comment>
<comment type="subcellular location">
    <subcellularLocation>
        <location evidence="1">Golgi apparatus membrane</location>
        <topology evidence="1">Peripheral membrane protein</topology>
        <orientation evidence="1">Cytoplasmic side</orientation>
    </subcellularLocation>
    <subcellularLocation>
        <location evidence="1">Golgi apparatus</location>
        <location evidence="1">trans-Golgi network</location>
    </subcellularLocation>
    <subcellularLocation>
        <location evidence="1">Cytoplasm</location>
        <location evidence="1">Cytosol</location>
    </subcellularLocation>
</comment>
<comment type="similarity">
    <text evidence="3">Belongs to the SCOC family.</text>
</comment>
<sequence length="76" mass="8684">MDGDIENQVELEEKTRLINQVLELQNTLEDLSARVDAVKEENLKLKSENQVLGQYIENLMSASSVFQTTDSKSKRK</sequence>
<gene>
    <name type="primary">scocb</name>
    <name type="ORF">zgc:101848</name>
</gene>
<reference key="1">
    <citation type="submission" date="2004-10" db="EMBL/GenBank/DDBJ databases">
        <authorList>
            <consortium name="NIH - Zebrafish Gene Collection (ZGC) project"/>
        </authorList>
    </citation>
    <scope>NUCLEOTIDE SEQUENCE [LARGE SCALE MRNA]</scope>
    <source>
        <tissue>Larva</tissue>
    </source>
</reference>
<keyword id="KW-0175">Coiled coil</keyword>
<keyword id="KW-0963">Cytoplasm</keyword>
<keyword id="KW-0333">Golgi apparatus</keyword>
<keyword id="KW-0472">Membrane</keyword>
<keyword id="KW-1185">Reference proteome</keyword>
<dbReference type="EMBL" id="BC083300">
    <property type="protein sequence ID" value="AAH83300.1"/>
    <property type="molecule type" value="mRNA"/>
</dbReference>
<dbReference type="SMR" id="Q5XJK1"/>
<dbReference type="FunCoup" id="Q5XJK1">
    <property type="interactions" value="1"/>
</dbReference>
<dbReference type="STRING" id="7955.ENSDARP00000023570"/>
<dbReference type="PaxDb" id="7955-ENSDARP00000023570"/>
<dbReference type="AGR" id="ZFIN:ZDB-GENE-041010-41"/>
<dbReference type="ZFIN" id="ZDB-GENE-041010-41">
    <property type="gene designation" value="scocb"/>
</dbReference>
<dbReference type="eggNOG" id="KOG3650">
    <property type="taxonomic scope" value="Eukaryota"/>
</dbReference>
<dbReference type="HOGENOM" id="CLU_130081_2_0_1"/>
<dbReference type="InParanoid" id="Q5XJK1"/>
<dbReference type="PhylomeDB" id="Q5XJK1"/>
<dbReference type="TreeFam" id="TF323340"/>
<dbReference type="PRO" id="PR:Q5XJK1"/>
<dbReference type="Proteomes" id="UP000000437">
    <property type="component" value="Unplaced"/>
</dbReference>
<dbReference type="GO" id="GO:0005829">
    <property type="term" value="C:cytosol"/>
    <property type="evidence" value="ECO:0007669"/>
    <property type="project" value="UniProtKB-SubCell"/>
</dbReference>
<dbReference type="GO" id="GO:0000139">
    <property type="term" value="C:Golgi membrane"/>
    <property type="evidence" value="ECO:0007669"/>
    <property type="project" value="UniProtKB-SubCell"/>
</dbReference>
<dbReference type="GO" id="GO:0016239">
    <property type="term" value="P:positive regulation of macroautophagy"/>
    <property type="evidence" value="ECO:0000250"/>
    <property type="project" value="GO_Central"/>
</dbReference>
<dbReference type="GO" id="GO:0061635">
    <property type="term" value="P:regulation of protein complex stability"/>
    <property type="evidence" value="ECO:0000250"/>
    <property type="project" value="GO_Central"/>
</dbReference>
<dbReference type="FunFam" id="1.20.5.170:FF:000038">
    <property type="entry name" value="Short coiled-coil protein a"/>
    <property type="match status" value="1"/>
</dbReference>
<dbReference type="Gene3D" id="1.20.5.170">
    <property type="match status" value="1"/>
</dbReference>
<dbReference type="InterPro" id="IPR019357">
    <property type="entry name" value="SCOC"/>
</dbReference>
<dbReference type="PANTHER" id="PTHR21614">
    <property type="entry name" value="SHORT COILED COIL PROTEIN"/>
    <property type="match status" value="1"/>
</dbReference>
<dbReference type="PANTHER" id="PTHR21614:SF1">
    <property type="entry name" value="SHORT COILED-COIL PROTEIN"/>
    <property type="match status" value="1"/>
</dbReference>
<dbReference type="Pfam" id="PF10224">
    <property type="entry name" value="DUF2205"/>
    <property type="match status" value="1"/>
</dbReference>
<evidence type="ECO:0000250" key="1"/>
<evidence type="ECO:0000255" key="2"/>
<evidence type="ECO:0000305" key="3"/>
<protein>
    <recommendedName>
        <fullName>Short coiled-coil protein B</fullName>
    </recommendedName>
</protein>
<accession>Q5XJK1</accession>
<organism>
    <name type="scientific">Danio rerio</name>
    <name type="common">Zebrafish</name>
    <name type="synonym">Brachydanio rerio</name>
    <dbReference type="NCBI Taxonomy" id="7955"/>
    <lineage>
        <taxon>Eukaryota</taxon>
        <taxon>Metazoa</taxon>
        <taxon>Chordata</taxon>
        <taxon>Craniata</taxon>
        <taxon>Vertebrata</taxon>
        <taxon>Euteleostomi</taxon>
        <taxon>Actinopterygii</taxon>
        <taxon>Neopterygii</taxon>
        <taxon>Teleostei</taxon>
        <taxon>Ostariophysi</taxon>
        <taxon>Cypriniformes</taxon>
        <taxon>Danionidae</taxon>
        <taxon>Danioninae</taxon>
        <taxon>Danio</taxon>
    </lineage>
</organism>
<proteinExistence type="inferred from homology"/>
<name>SCOCB_DANRE</name>